<evidence type="ECO:0000255" key="1">
    <source>
        <dbReference type="HAMAP-Rule" id="MF_01423"/>
    </source>
</evidence>
<evidence type="ECO:0000305" key="2"/>
<organism>
    <name type="scientific">Shigella flexneri</name>
    <dbReference type="NCBI Taxonomy" id="623"/>
    <lineage>
        <taxon>Bacteria</taxon>
        <taxon>Pseudomonadati</taxon>
        <taxon>Pseudomonadota</taxon>
        <taxon>Gammaproteobacteria</taxon>
        <taxon>Enterobacterales</taxon>
        <taxon>Enterobacteriaceae</taxon>
        <taxon>Shigella</taxon>
    </lineage>
</organism>
<protein>
    <recommendedName>
        <fullName evidence="1">Multidrug resistance protein MdtB</fullName>
    </recommendedName>
    <alternativeName>
        <fullName evidence="1">Multidrug transporter MdtB</fullName>
    </alternativeName>
</protein>
<proteinExistence type="inferred from homology"/>
<gene>
    <name evidence="1" type="primary">mdtB</name>
    <name type="ordered locus">S2265</name>
</gene>
<accession>P69340</accession>
<keyword id="KW-0997">Cell inner membrane</keyword>
<keyword id="KW-1003">Cell membrane</keyword>
<keyword id="KW-0472">Membrane</keyword>
<keyword id="KW-0812">Transmembrane</keyword>
<keyword id="KW-1133">Transmembrane helix</keyword>
<keyword id="KW-0813">Transport</keyword>
<feature type="chain" id="PRO_0000161828" description="Multidrug resistance protein MdtB">
    <location>
        <begin position="1"/>
        <end position="1039"/>
    </location>
</feature>
<feature type="transmembrane region" description="Helical" evidence="1">
    <location>
        <begin position="15"/>
        <end position="37"/>
    </location>
</feature>
<feature type="transmembrane region" description="Helical" evidence="1">
    <location>
        <begin position="345"/>
        <end position="362"/>
    </location>
</feature>
<feature type="transmembrane region" description="Helical" evidence="1">
    <location>
        <begin position="367"/>
        <end position="389"/>
    </location>
</feature>
<feature type="transmembrane region" description="Helical" evidence="1">
    <location>
        <begin position="396"/>
        <end position="418"/>
    </location>
</feature>
<feature type="transmembrane region" description="Helical" evidence="1">
    <location>
        <begin position="438"/>
        <end position="460"/>
    </location>
</feature>
<feature type="transmembrane region" description="Helical" evidence="1">
    <location>
        <begin position="472"/>
        <end position="494"/>
    </location>
</feature>
<feature type="transmembrane region" description="Helical" evidence="1">
    <location>
        <begin position="535"/>
        <end position="557"/>
    </location>
</feature>
<feature type="transmembrane region" description="Helical" evidence="1">
    <location>
        <begin position="866"/>
        <end position="888"/>
    </location>
</feature>
<feature type="transmembrane region" description="Helical" evidence="1">
    <location>
        <begin position="908"/>
        <end position="930"/>
    </location>
</feature>
<feature type="transmembrane region" description="Helical" evidence="1">
    <location>
        <begin position="967"/>
        <end position="989"/>
    </location>
</feature>
<feature type="transmembrane region" description="Helical" evidence="1">
    <location>
        <begin position="999"/>
        <end position="1021"/>
    </location>
</feature>
<comment type="subunit">
    <text evidence="1">Part of a tripartite efflux system composed of MdtA, MdtB and MdtC. MdtB forms a heteromultimer with MdtC.</text>
</comment>
<comment type="subcellular location">
    <subcellularLocation>
        <location evidence="1">Cell inner membrane</location>
        <topology evidence="1">Multi-pass membrane protein</topology>
    </subcellularLocation>
</comment>
<comment type="similarity">
    <text evidence="1">Belongs to the resistance-nodulation-cell division (RND) (TC 2.A.6) family. MdtB subfamily.</text>
</comment>
<comment type="caution">
    <text evidence="2">In strain 301 the corresponding sequence has an in-frame codon. The sequence has been checked and is believed to be correct.</text>
</comment>
<reference key="1">
    <citation type="journal article" date="2003" name="Infect. Immun.">
        <title>Complete genome sequence and comparative genomics of Shigella flexneri serotype 2a strain 2457T.</title>
        <authorList>
            <person name="Wei J."/>
            <person name="Goldberg M.B."/>
            <person name="Burland V."/>
            <person name="Venkatesan M.M."/>
            <person name="Deng W."/>
            <person name="Fournier G."/>
            <person name="Mayhew G.F."/>
            <person name="Plunkett G. III"/>
            <person name="Rose D.J."/>
            <person name="Darling A."/>
            <person name="Mau B."/>
            <person name="Perna N.T."/>
            <person name="Payne S.M."/>
            <person name="Runyen-Janecky L.J."/>
            <person name="Zhou S."/>
            <person name="Schwartz D.C."/>
            <person name="Blattner F.R."/>
        </authorList>
    </citation>
    <scope>NUCLEOTIDE SEQUENCE [LARGE SCALE GENOMIC DNA]</scope>
    <source>
        <strain>ATCC 700930 / 2457T / Serotype 2a</strain>
    </source>
</reference>
<sequence>MQVLPPSSTGGPSRLFIMRPVATTLLMVAILLAGIIGYRALPVSALPEVDYPTIQVVTLYPGASPDVMTSAVTAPLERQFGQMSGLKQMSSQSSGGASVITLQFQLTLPLNVAEQEVQAAINAATNLLPSDLPNPPVYSKVNPADPPIMTLAVTSTAMPMTQVEDMVETRVAQKISQISGVGLVTLSGGQRPAVRVKLNAQAIAALGLTSETVRTAITGANVNSAKGSLDGPSRAVTLSANDQMQSAEEYRQLIIAYQNGAPIRLGDVATVEQGAENSWLGAWANKEQAIVMNVQRQPGANIISTADSIRQMLPQLTESLPKSVKVTVLSDRTTNIRASVDDTQFELMMAIALVVMIIYLFLRNIPATIIPGVAVPLSLIGTFAVMVFLDFSINNLTLMALTIATGFVVDDAIVVIENISRYIEKGEKPLAAALKGAGEIGFTIISLTFSLIAVLIPLLFMGDIVGRLFREFAITLAVAILISAVVSLTLTPMMCARMLSQESLRKQNRFSRASEKMFDRIIAAYGRGLAKVLNHPWLTLSVALSTLLLSVLLWVFIPKGFFPVQDNGIIQGTLQAPQSSSFANMAQRQRQVADVILQDPAVQSLTSFVGVDGTNPSLNSARLQINLKPLDERDDRVQKVIARLQTAVDKVPGVDLFLQPTQDLTIDTQVSRTQYQFTLQATSLDALSTWVPQLMEKLQQLPQLSDVSSDWQDKGLVAYVNVDRDSASRLGISMADVDNALYNAFGQRLISTIYTQANQYRVVLEHNTENTPGLAALDTIRLTSSDGGVVPLSSIAKIEQRFAPLSINHLDQFPVTTISFNVPDNYSLGHAVQAIMDTEKTLNLPVDITTQFGSTLAFQSALGSTVWLIVAAVVAMYIVLGILYESFIHPITILSTLPTAGVGALLALMIAGSELDVIAIIGIILLIGIVKKNAIMMIDFALAAEREQGMSPRDAIYQACLLRFRPILMTTLAALLGALPLMLSTGVGAELRRPLGIGMVGGLIVSQVLTLFTTPVIYLLFDRLALWTKSRFARHEEEA</sequence>
<dbReference type="EMBL" id="AE014073">
    <property type="status" value="NOT_ANNOTATED_CDS"/>
    <property type="molecule type" value="Genomic_DNA"/>
</dbReference>
<dbReference type="SMR" id="P69340"/>
<dbReference type="Proteomes" id="UP000002673">
    <property type="component" value="Chromosome"/>
</dbReference>
<dbReference type="GO" id="GO:0005886">
    <property type="term" value="C:plasma membrane"/>
    <property type="evidence" value="ECO:0007669"/>
    <property type="project" value="UniProtKB-SubCell"/>
</dbReference>
<dbReference type="GO" id="GO:0042910">
    <property type="term" value="F:xenobiotic transmembrane transporter activity"/>
    <property type="evidence" value="ECO:0007669"/>
    <property type="project" value="TreeGrafter"/>
</dbReference>
<dbReference type="FunFam" id="1.20.1640.10:FF:000001">
    <property type="entry name" value="Efflux pump membrane transporter"/>
    <property type="match status" value="1"/>
</dbReference>
<dbReference type="FunFam" id="3.30.70.1430:FF:000001">
    <property type="entry name" value="Efflux pump membrane transporter"/>
    <property type="match status" value="1"/>
</dbReference>
<dbReference type="FunFam" id="3.30.2090.10:FF:000003">
    <property type="entry name" value="Multidrug resistance protein MdtB"/>
    <property type="match status" value="1"/>
</dbReference>
<dbReference type="FunFam" id="3.30.2090.10:FF:000006">
    <property type="entry name" value="Multidrug resistance protein MdtB"/>
    <property type="match status" value="1"/>
</dbReference>
<dbReference type="Gene3D" id="3.30.70.1430">
    <property type="entry name" value="Multidrug efflux transporter AcrB pore domain"/>
    <property type="match status" value="2"/>
</dbReference>
<dbReference type="Gene3D" id="3.30.70.1440">
    <property type="entry name" value="Multidrug efflux transporter AcrB pore domain"/>
    <property type="match status" value="1"/>
</dbReference>
<dbReference type="Gene3D" id="3.30.70.1320">
    <property type="entry name" value="Multidrug efflux transporter AcrB pore domain like"/>
    <property type="match status" value="1"/>
</dbReference>
<dbReference type="Gene3D" id="3.30.2090.10">
    <property type="entry name" value="Multidrug efflux transporter AcrB TolC docking domain, DN and DC subdomains"/>
    <property type="match status" value="2"/>
</dbReference>
<dbReference type="Gene3D" id="1.20.1640.10">
    <property type="entry name" value="Multidrug efflux transporter AcrB transmembrane domain"/>
    <property type="match status" value="2"/>
</dbReference>
<dbReference type="HAMAP" id="MF_01423">
    <property type="entry name" value="MdtB"/>
    <property type="match status" value="1"/>
</dbReference>
<dbReference type="InterPro" id="IPR027463">
    <property type="entry name" value="AcrB_DN_DC_subdom"/>
</dbReference>
<dbReference type="InterPro" id="IPR001036">
    <property type="entry name" value="Acrflvin-R"/>
</dbReference>
<dbReference type="InterPro" id="IPR022831">
    <property type="entry name" value="Multidrug-R_MdtB"/>
</dbReference>
<dbReference type="NCBIfam" id="NF007798">
    <property type="entry name" value="PRK10503.1"/>
    <property type="match status" value="1"/>
</dbReference>
<dbReference type="NCBIfam" id="NF033617">
    <property type="entry name" value="RND_permease_2"/>
    <property type="match status" value="1"/>
</dbReference>
<dbReference type="PANTHER" id="PTHR32063">
    <property type="match status" value="1"/>
</dbReference>
<dbReference type="PANTHER" id="PTHR32063:SF21">
    <property type="entry name" value="MULTIDRUG RESISTANCE PROTEIN MDTB"/>
    <property type="match status" value="1"/>
</dbReference>
<dbReference type="Pfam" id="PF00873">
    <property type="entry name" value="ACR_tran"/>
    <property type="match status" value="1"/>
</dbReference>
<dbReference type="PRINTS" id="PR00702">
    <property type="entry name" value="ACRIFLAVINRP"/>
</dbReference>
<dbReference type="SUPFAM" id="SSF82693">
    <property type="entry name" value="Multidrug efflux transporter AcrB pore domain, PN1, PN2, PC1 and PC2 subdomains"/>
    <property type="match status" value="3"/>
</dbReference>
<dbReference type="SUPFAM" id="SSF82714">
    <property type="entry name" value="Multidrug efflux transporter AcrB TolC docking domain, DN and DC subdomains"/>
    <property type="match status" value="2"/>
</dbReference>
<dbReference type="SUPFAM" id="SSF82866">
    <property type="entry name" value="Multidrug efflux transporter AcrB transmembrane domain"/>
    <property type="match status" value="2"/>
</dbReference>
<name>MDTB_SHIFL</name>